<dbReference type="EC" id="6.1.1.20" evidence="1"/>
<dbReference type="EMBL" id="CP000009">
    <property type="protein sequence ID" value="AAW60044.1"/>
    <property type="molecule type" value="Genomic_DNA"/>
</dbReference>
<dbReference type="RefSeq" id="WP_011251847.1">
    <property type="nucleotide sequence ID" value="NC_006677.1"/>
</dbReference>
<dbReference type="SMR" id="Q5FUA2"/>
<dbReference type="STRING" id="290633.GOX0261"/>
<dbReference type="KEGG" id="gox:GOX0261"/>
<dbReference type="eggNOG" id="COG0072">
    <property type="taxonomic scope" value="Bacteria"/>
</dbReference>
<dbReference type="eggNOG" id="COG0073">
    <property type="taxonomic scope" value="Bacteria"/>
</dbReference>
<dbReference type="HOGENOM" id="CLU_016891_0_0_5"/>
<dbReference type="Proteomes" id="UP000006375">
    <property type="component" value="Chromosome"/>
</dbReference>
<dbReference type="GO" id="GO:0009328">
    <property type="term" value="C:phenylalanine-tRNA ligase complex"/>
    <property type="evidence" value="ECO:0007669"/>
    <property type="project" value="TreeGrafter"/>
</dbReference>
<dbReference type="GO" id="GO:0005524">
    <property type="term" value="F:ATP binding"/>
    <property type="evidence" value="ECO:0007669"/>
    <property type="project" value="UniProtKB-UniRule"/>
</dbReference>
<dbReference type="GO" id="GO:0000287">
    <property type="term" value="F:magnesium ion binding"/>
    <property type="evidence" value="ECO:0007669"/>
    <property type="project" value="UniProtKB-UniRule"/>
</dbReference>
<dbReference type="GO" id="GO:0004826">
    <property type="term" value="F:phenylalanine-tRNA ligase activity"/>
    <property type="evidence" value="ECO:0007669"/>
    <property type="project" value="UniProtKB-UniRule"/>
</dbReference>
<dbReference type="GO" id="GO:0000049">
    <property type="term" value="F:tRNA binding"/>
    <property type="evidence" value="ECO:0007669"/>
    <property type="project" value="UniProtKB-KW"/>
</dbReference>
<dbReference type="GO" id="GO:0006432">
    <property type="term" value="P:phenylalanyl-tRNA aminoacylation"/>
    <property type="evidence" value="ECO:0007669"/>
    <property type="project" value="UniProtKB-UniRule"/>
</dbReference>
<dbReference type="CDD" id="cd00769">
    <property type="entry name" value="PheRS_beta_core"/>
    <property type="match status" value="1"/>
</dbReference>
<dbReference type="CDD" id="cd02796">
    <property type="entry name" value="tRNA_bind_bactPheRS"/>
    <property type="match status" value="1"/>
</dbReference>
<dbReference type="FunFam" id="2.40.50.140:FF:000045">
    <property type="entry name" value="Phenylalanine--tRNA ligase beta subunit"/>
    <property type="match status" value="1"/>
</dbReference>
<dbReference type="Gene3D" id="3.30.56.10">
    <property type="match status" value="2"/>
</dbReference>
<dbReference type="Gene3D" id="3.30.930.10">
    <property type="entry name" value="Bira Bifunctional Protein, Domain 2"/>
    <property type="match status" value="1"/>
</dbReference>
<dbReference type="Gene3D" id="3.30.70.380">
    <property type="entry name" value="Ferrodoxin-fold anticodon-binding domain"/>
    <property type="match status" value="1"/>
</dbReference>
<dbReference type="Gene3D" id="2.40.50.140">
    <property type="entry name" value="Nucleic acid-binding proteins"/>
    <property type="match status" value="1"/>
</dbReference>
<dbReference type="Gene3D" id="3.50.40.10">
    <property type="entry name" value="Phenylalanyl-trna Synthetase, Chain B, domain 3"/>
    <property type="match status" value="1"/>
</dbReference>
<dbReference type="HAMAP" id="MF_00283">
    <property type="entry name" value="Phe_tRNA_synth_beta1"/>
    <property type="match status" value="1"/>
</dbReference>
<dbReference type="InterPro" id="IPR045864">
    <property type="entry name" value="aa-tRNA-synth_II/BPL/LPL"/>
</dbReference>
<dbReference type="InterPro" id="IPR005146">
    <property type="entry name" value="B3/B4_tRNA-bd"/>
</dbReference>
<dbReference type="InterPro" id="IPR009061">
    <property type="entry name" value="DNA-bd_dom_put_sf"/>
</dbReference>
<dbReference type="InterPro" id="IPR005121">
    <property type="entry name" value="Fdx_antiC-bd"/>
</dbReference>
<dbReference type="InterPro" id="IPR036690">
    <property type="entry name" value="Fdx_antiC-bd_sf"/>
</dbReference>
<dbReference type="InterPro" id="IPR012340">
    <property type="entry name" value="NA-bd_OB-fold"/>
</dbReference>
<dbReference type="InterPro" id="IPR045060">
    <property type="entry name" value="Phe-tRNA-ligase_IIc_bsu"/>
</dbReference>
<dbReference type="InterPro" id="IPR004532">
    <property type="entry name" value="Phe-tRNA-ligase_IIc_bsu_bact"/>
</dbReference>
<dbReference type="InterPro" id="IPR020825">
    <property type="entry name" value="Phe-tRNA_synthase-like_B3/B4"/>
</dbReference>
<dbReference type="InterPro" id="IPR041616">
    <property type="entry name" value="PheRS_beta_core"/>
</dbReference>
<dbReference type="InterPro" id="IPR002547">
    <property type="entry name" value="tRNA-bd_dom"/>
</dbReference>
<dbReference type="InterPro" id="IPR033714">
    <property type="entry name" value="tRNA_bind_bactPheRS"/>
</dbReference>
<dbReference type="InterPro" id="IPR005147">
    <property type="entry name" value="tRNA_synthase_B5-dom"/>
</dbReference>
<dbReference type="NCBIfam" id="TIGR00472">
    <property type="entry name" value="pheT_bact"/>
    <property type="match status" value="1"/>
</dbReference>
<dbReference type="NCBIfam" id="NF045760">
    <property type="entry name" value="YtpR"/>
    <property type="match status" value="1"/>
</dbReference>
<dbReference type="PANTHER" id="PTHR10947:SF0">
    <property type="entry name" value="PHENYLALANINE--TRNA LIGASE BETA SUBUNIT"/>
    <property type="match status" value="1"/>
</dbReference>
<dbReference type="PANTHER" id="PTHR10947">
    <property type="entry name" value="PHENYLALANYL-TRNA SYNTHETASE BETA CHAIN AND LEUCINE-RICH REPEAT-CONTAINING PROTEIN 47"/>
    <property type="match status" value="1"/>
</dbReference>
<dbReference type="Pfam" id="PF03483">
    <property type="entry name" value="B3_4"/>
    <property type="match status" value="1"/>
</dbReference>
<dbReference type="Pfam" id="PF03484">
    <property type="entry name" value="B5"/>
    <property type="match status" value="1"/>
</dbReference>
<dbReference type="Pfam" id="PF03147">
    <property type="entry name" value="FDX-ACB"/>
    <property type="match status" value="1"/>
</dbReference>
<dbReference type="Pfam" id="PF01588">
    <property type="entry name" value="tRNA_bind"/>
    <property type="match status" value="1"/>
</dbReference>
<dbReference type="Pfam" id="PF17759">
    <property type="entry name" value="tRNA_synthFbeta"/>
    <property type="match status" value="1"/>
</dbReference>
<dbReference type="SMART" id="SM00873">
    <property type="entry name" value="B3_4"/>
    <property type="match status" value="1"/>
</dbReference>
<dbReference type="SMART" id="SM00874">
    <property type="entry name" value="B5"/>
    <property type="match status" value="1"/>
</dbReference>
<dbReference type="SMART" id="SM00896">
    <property type="entry name" value="FDX-ACB"/>
    <property type="match status" value="1"/>
</dbReference>
<dbReference type="SUPFAM" id="SSF54991">
    <property type="entry name" value="Anticodon-binding domain of PheRS"/>
    <property type="match status" value="1"/>
</dbReference>
<dbReference type="SUPFAM" id="SSF55681">
    <property type="entry name" value="Class II aaRS and biotin synthetases"/>
    <property type="match status" value="1"/>
</dbReference>
<dbReference type="SUPFAM" id="SSF50249">
    <property type="entry name" value="Nucleic acid-binding proteins"/>
    <property type="match status" value="1"/>
</dbReference>
<dbReference type="SUPFAM" id="SSF56037">
    <property type="entry name" value="PheT/TilS domain"/>
    <property type="match status" value="1"/>
</dbReference>
<dbReference type="SUPFAM" id="SSF46955">
    <property type="entry name" value="Putative DNA-binding domain"/>
    <property type="match status" value="1"/>
</dbReference>
<dbReference type="PROSITE" id="PS51483">
    <property type="entry name" value="B5"/>
    <property type="match status" value="1"/>
</dbReference>
<dbReference type="PROSITE" id="PS51447">
    <property type="entry name" value="FDX_ACB"/>
    <property type="match status" value="1"/>
</dbReference>
<dbReference type="PROSITE" id="PS50886">
    <property type="entry name" value="TRBD"/>
    <property type="match status" value="1"/>
</dbReference>
<accession>Q5FUA2</accession>
<gene>
    <name evidence="1" type="primary">pheT</name>
    <name type="ordered locus">GOX0261</name>
</gene>
<proteinExistence type="inferred from homology"/>
<feature type="chain" id="PRO_0000232800" description="Phenylalanine--tRNA ligase beta subunit">
    <location>
        <begin position="1"/>
        <end position="822"/>
    </location>
</feature>
<feature type="domain" description="tRNA-binding" evidence="1">
    <location>
        <begin position="39"/>
        <end position="150"/>
    </location>
</feature>
<feature type="domain" description="B5" evidence="1">
    <location>
        <begin position="399"/>
        <end position="502"/>
    </location>
</feature>
<feature type="domain" description="FDX-ACB" evidence="1">
    <location>
        <begin position="728"/>
        <end position="821"/>
    </location>
</feature>
<feature type="binding site" evidence="1">
    <location>
        <position position="486"/>
    </location>
    <ligand>
        <name>Mg(2+)</name>
        <dbReference type="ChEBI" id="CHEBI:18420"/>
        <note>shared with alpha subunit</note>
    </ligand>
</feature>
<feature type="binding site" evidence="1">
    <location>
        <position position="489"/>
    </location>
    <ligand>
        <name>Mg(2+)</name>
        <dbReference type="ChEBI" id="CHEBI:18420"/>
        <note>shared with alpha subunit</note>
    </ligand>
</feature>
<feature type="binding site" evidence="1">
    <location>
        <position position="490"/>
    </location>
    <ligand>
        <name>Mg(2+)</name>
        <dbReference type="ChEBI" id="CHEBI:18420"/>
        <note>shared with alpha subunit</note>
    </ligand>
</feature>
<evidence type="ECO:0000255" key="1">
    <source>
        <dbReference type="HAMAP-Rule" id="MF_00283"/>
    </source>
</evidence>
<evidence type="ECO:0000305" key="2"/>
<keyword id="KW-0030">Aminoacyl-tRNA synthetase</keyword>
<keyword id="KW-0067">ATP-binding</keyword>
<keyword id="KW-0963">Cytoplasm</keyword>
<keyword id="KW-0436">Ligase</keyword>
<keyword id="KW-0460">Magnesium</keyword>
<keyword id="KW-0479">Metal-binding</keyword>
<keyword id="KW-0547">Nucleotide-binding</keyword>
<keyword id="KW-0648">Protein biosynthesis</keyword>
<keyword id="KW-1185">Reference proteome</keyword>
<keyword id="KW-0694">RNA-binding</keyword>
<keyword id="KW-0820">tRNA-binding</keyword>
<protein>
    <recommendedName>
        <fullName evidence="1">Phenylalanine--tRNA ligase beta subunit</fullName>
        <ecNumber evidence="1">6.1.1.20</ecNumber>
    </recommendedName>
    <alternativeName>
        <fullName evidence="1">Phenylalanyl-tRNA synthetase beta subunit</fullName>
        <shortName evidence="1">PheRS</shortName>
    </alternativeName>
</protein>
<name>SYFB_GLUOX</name>
<reference key="1">
    <citation type="journal article" date="2005" name="Nat. Biotechnol.">
        <title>Complete genome sequence of the acetic acid bacterium Gluconobacter oxydans.</title>
        <authorList>
            <person name="Prust C."/>
            <person name="Hoffmeister M."/>
            <person name="Liesegang H."/>
            <person name="Wiezer A."/>
            <person name="Fricke W.F."/>
            <person name="Ehrenreich A."/>
            <person name="Gottschalk G."/>
            <person name="Deppenmeier U."/>
        </authorList>
    </citation>
    <scope>NUCLEOTIDE SEQUENCE [LARGE SCALE GENOMIC DNA]</scope>
    <source>
        <strain>621H</strain>
    </source>
</reference>
<organism>
    <name type="scientific">Gluconobacter oxydans (strain 621H)</name>
    <name type="common">Gluconobacter suboxydans</name>
    <dbReference type="NCBI Taxonomy" id="290633"/>
    <lineage>
        <taxon>Bacteria</taxon>
        <taxon>Pseudomonadati</taxon>
        <taxon>Pseudomonadota</taxon>
        <taxon>Alphaproteobacteria</taxon>
        <taxon>Acetobacterales</taxon>
        <taxon>Acetobacteraceae</taxon>
        <taxon>Gluconobacter</taxon>
    </lineage>
</organism>
<comment type="catalytic activity">
    <reaction evidence="1">
        <text>tRNA(Phe) + L-phenylalanine + ATP = L-phenylalanyl-tRNA(Phe) + AMP + diphosphate + H(+)</text>
        <dbReference type="Rhea" id="RHEA:19413"/>
        <dbReference type="Rhea" id="RHEA-COMP:9668"/>
        <dbReference type="Rhea" id="RHEA-COMP:9699"/>
        <dbReference type="ChEBI" id="CHEBI:15378"/>
        <dbReference type="ChEBI" id="CHEBI:30616"/>
        <dbReference type="ChEBI" id="CHEBI:33019"/>
        <dbReference type="ChEBI" id="CHEBI:58095"/>
        <dbReference type="ChEBI" id="CHEBI:78442"/>
        <dbReference type="ChEBI" id="CHEBI:78531"/>
        <dbReference type="ChEBI" id="CHEBI:456215"/>
        <dbReference type="EC" id="6.1.1.20"/>
    </reaction>
</comment>
<comment type="cofactor">
    <cofactor evidence="1">
        <name>Mg(2+)</name>
        <dbReference type="ChEBI" id="CHEBI:18420"/>
    </cofactor>
    <text evidence="1">Binds 2 magnesium ions per tetramer.</text>
</comment>
<comment type="subunit">
    <text evidence="1">Tetramer of two alpha and two beta subunits.</text>
</comment>
<comment type="subcellular location">
    <subcellularLocation>
        <location evidence="1">Cytoplasm</location>
    </subcellularLocation>
</comment>
<comment type="similarity">
    <text evidence="1">Belongs to the phenylalanyl-tRNA synthetase beta subunit family. Type 1 subfamily.</text>
</comment>
<comment type="caution">
    <text evidence="2">Lacks the conserved aspartate residue in position 480 that binds magnesium; it is replaced by a serine residue.</text>
</comment>
<sequence>MKFSLSWLREHLDFTASVEEICARLNIIGLEVEGVENPADRLVGFRTAKIVEAHRHPDADRLQVCRVAAGAGFEDVQVVCGAPNARAGLHVIFATPGTYVPGLDITIKKGKIRGQDSGGMLCSLRELGIGEESNGIAELSETAPIGESYAAYAELDDPVIEIAITPNRGDALSIRGIARDLAAGGIGHLKPWLTEAVEGDFPSPLTWKTEHPACPYIVGRVIRGVKNGPSPDWLQRRLESVGVKPISALVDVTNYLTYDLGRPLHVFDVAKLKGDTLTVTHAARETFTGLDGREYVLGTEDMIIVDEAGVQSLAGLIGGESSGVDENTIDVFVESALFDPVRIALTGRRLAIHTDARQRFERGIDPAQVLNGLEAATVMIRDLCGGEVSEITEAGALPDWKRTARLRFERLKTLGGVDIAADDTVRSLEHLGFEVTERTEDAATFLVPSWRNDIASGQVLAQAPTLDEDVASRAASHVQAMEAECDLLEEVLRLYGLDNVPAVALPQTTVVPAPAVTPLQARAALLRRVCAARGLTETVGFSFVAQDDAALFGDVPETQHLLNPIATDLDQLRPTPLINLARALSRNLARGLGLSGEGALFEVGPSFDATGQHLRLAGLRAGLTAREPGVAAHEATLWEAKADLTAALVALGVPEAALSVTADAPGFYHPGRSGQVRQGPKMVLGTFGELHPRVARALGLSGTVVAFEVYLDQVPLPKAKRKAAPVLSPLQPVRRDFAFVAGPDVEIQAVLKAARMADRNLVQDVRLFDVFEGGSLPEGHRSLGVEVVLQPQSESLTDTQLEAVSKSVEAAVLKATGAVLRR</sequence>